<feature type="initiator methionine" description="Removed" evidence="1">
    <location>
        <position position="1"/>
    </location>
</feature>
<feature type="chain" id="PRO_0000149133" description="Large ribosomal subunit protein eL42">
    <location>
        <begin position="2"/>
        <end position="105"/>
    </location>
</feature>
<feature type="region of interest" description="Disordered" evidence="2">
    <location>
        <begin position="28"/>
        <end position="57"/>
    </location>
</feature>
<protein>
    <recommendedName>
        <fullName evidence="3">Large ribosomal subunit protein eL42</fullName>
    </recommendedName>
    <alternativeName>
        <fullName>60S ribosomal protein L44</fullName>
    </alternativeName>
</protein>
<reference key="1">
    <citation type="journal article" date="1996" name="Biochem. Biophys. Res. Commun.">
        <title>Ribosomal protein RL44 is encoded by two subfamilies in upland cotton (Gossypium hirsutum L.).</title>
        <authorList>
            <person name="Hood G."/>
            <person name="Turley R.B."/>
            <person name="Steen J.S."/>
        </authorList>
    </citation>
    <scope>NUCLEOTIDE SEQUENCE [MRNA]</scope>
    <source>
        <strain>cv. Deltapine 62</strain>
    </source>
</reference>
<gene>
    <name type="primary">RPL44</name>
    <name type="synonym">RL44</name>
</gene>
<sequence length="105" mass="12029">MVNVPKTKKTYCKSKECRKHTLHKVTQYKKGKDSLAAQGKRRYDRKQSGYGGQTKPVFHKKAKTTKKIVLRLQCQGCKHVSQHPIKRCKHFEIGGDKKGKGTSLF</sequence>
<name>RL44_GOSHI</name>
<proteinExistence type="inferred from homology"/>
<comment type="similarity">
    <text evidence="3">Belongs to the eukaryotic ribosomal protein eL42 family.</text>
</comment>
<accession>Q96499</accession>
<organism>
    <name type="scientific">Gossypium hirsutum</name>
    <name type="common">Upland cotton</name>
    <name type="synonym">Gossypium mexicanum</name>
    <dbReference type="NCBI Taxonomy" id="3635"/>
    <lineage>
        <taxon>Eukaryota</taxon>
        <taxon>Viridiplantae</taxon>
        <taxon>Streptophyta</taxon>
        <taxon>Embryophyta</taxon>
        <taxon>Tracheophyta</taxon>
        <taxon>Spermatophyta</taxon>
        <taxon>Magnoliopsida</taxon>
        <taxon>eudicotyledons</taxon>
        <taxon>Gunneridae</taxon>
        <taxon>Pentapetalae</taxon>
        <taxon>rosids</taxon>
        <taxon>malvids</taxon>
        <taxon>Malvales</taxon>
        <taxon>Malvaceae</taxon>
        <taxon>Malvoideae</taxon>
        <taxon>Gossypium</taxon>
    </lineage>
</organism>
<dbReference type="EMBL" id="U64677">
    <property type="protein sequence ID" value="AAB08726.1"/>
    <property type="molecule type" value="mRNA"/>
</dbReference>
<dbReference type="EMBL" id="U64678">
    <property type="protein sequence ID" value="AAB08727.1"/>
    <property type="molecule type" value="mRNA"/>
</dbReference>
<dbReference type="PIR" id="JC4923">
    <property type="entry name" value="JC4923"/>
</dbReference>
<dbReference type="RefSeq" id="XP_016703571.1">
    <property type="nucleotide sequence ID" value="XM_016848082.1"/>
</dbReference>
<dbReference type="SMR" id="Q96499"/>
<dbReference type="STRING" id="3635.Q96499"/>
<dbReference type="PaxDb" id="3635-Q96499"/>
<dbReference type="KEGG" id="ghi:107886824"/>
<dbReference type="KEGG" id="ghi:107894041"/>
<dbReference type="KEGG" id="ghi:107898862"/>
<dbReference type="KEGG" id="ghi:107918511"/>
<dbReference type="KEGG" id="ghi:107946105"/>
<dbReference type="OMA" id="CKKHTIH"/>
<dbReference type="OrthoDB" id="5086at41938"/>
<dbReference type="Proteomes" id="UP000189702">
    <property type="component" value="Chromosome 24"/>
</dbReference>
<dbReference type="GO" id="GO:0022625">
    <property type="term" value="C:cytosolic large ribosomal subunit"/>
    <property type="evidence" value="ECO:0000318"/>
    <property type="project" value="GO_Central"/>
</dbReference>
<dbReference type="GO" id="GO:0003735">
    <property type="term" value="F:structural constituent of ribosome"/>
    <property type="evidence" value="ECO:0007669"/>
    <property type="project" value="InterPro"/>
</dbReference>
<dbReference type="GO" id="GO:0006412">
    <property type="term" value="P:translation"/>
    <property type="evidence" value="ECO:0007669"/>
    <property type="project" value="InterPro"/>
</dbReference>
<dbReference type="FunFam" id="3.10.450.80:FF:000001">
    <property type="entry name" value="60S ribosomal protein L44"/>
    <property type="match status" value="1"/>
</dbReference>
<dbReference type="Gene3D" id="3.10.450.80">
    <property type="match status" value="1"/>
</dbReference>
<dbReference type="InterPro" id="IPR000552">
    <property type="entry name" value="Ribosomal_eL44"/>
</dbReference>
<dbReference type="InterPro" id="IPR053708">
    <property type="entry name" value="Ribosomal_LSU_eL42"/>
</dbReference>
<dbReference type="InterPro" id="IPR011332">
    <property type="entry name" value="Ribosomal_zn-bd"/>
</dbReference>
<dbReference type="PANTHER" id="PTHR10369">
    <property type="entry name" value="60S RIBOSOMAL PROTEIN L36A/L44"/>
    <property type="match status" value="1"/>
</dbReference>
<dbReference type="Pfam" id="PF00935">
    <property type="entry name" value="Ribosomal_L44"/>
    <property type="match status" value="1"/>
</dbReference>
<dbReference type="SUPFAM" id="SSF57829">
    <property type="entry name" value="Zn-binding ribosomal proteins"/>
    <property type="match status" value="1"/>
</dbReference>
<dbReference type="PROSITE" id="PS01172">
    <property type="entry name" value="RIBOSOMAL_L44E"/>
    <property type="match status" value="1"/>
</dbReference>
<keyword id="KW-1185">Reference proteome</keyword>
<keyword id="KW-0687">Ribonucleoprotein</keyword>
<keyword id="KW-0689">Ribosomal protein</keyword>
<evidence type="ECO:0000250" key="1"/>
<evidence type="ECO:0000256" key="2">
    <source>
        <dbReference type="SAM" id="MobiDB-lite"/>
    </source>
</evidence>
<evidence type="ECO:0000305" key="3"/>